<reference key="1">
    <citation type="journal article" date="2002" name="DNA Res.">
        <title>Complete genomic sequence of nitrogen-fixing symbiotic bacterium Bradyrhizobium japonicum USDA110.</title>
        <authorList>
            <person name="Kaneko T."/>
            <person name="Nakamura Y."/>
            <person name="Sato S."/>
            <person name="Minamisawa K."/>
            <person name="Uchiumi T."/>
            <person name="Sasamoto S."/>
            <person name="Watanabe A."/>
            <person name="Idesawa K."/>
            <person name="Iriguchi M."/>
            <person name="Kawashima K."/>
            <person name="Kohara M."/>
            <person name="Matsumoto M."/>
            <person name="Shimpo S."/>
            <person name="Tsuruoka H."/>
            <person name="Wada T."/>
            <person name="Yamada M."/>
            <person name="Tabata S."/>
        </authorList>
    </citation>
    <scope>NUCLEOTIDE SEQUENCE [LARGE SCALE GENOMIC DNA]</scope>
    <source>
        <strain>JCM 10833 / BCRC 13528 / IAM 13628 / NBRC 14792 / USDA 110</strain>
    </source>
</reference>
<organism>
    <name type="scientific">Bradyrhizobium diazoefficiens (strain JCM 10833 / BCRC 13528 / IAM 13628 / NBRC 14792 / USDA 110)</name>
    <dbReference type="NCBI Taxonomy" id="224911"/>
    <lineage>
        <taxon>Bacteria</taxon>
        <taxon>Pseudomonadati</taxon>
        <taxon>Pseudomonadota</taxon>
        <taxon>Alphaproteobacteria</taxon>
        <taxon>Hyphomicrobiales</taxon>
        <taxon>Nitrobacteraceae</taxon>
        <taxon>Bradyrhizobium</taxon>
    </lineage>
</organism>
<protein>
    <recommendedName>
        <fullName evidence="1">Large ribosomal subunit protein bL34</fullName>
    </recommendedName>
    <alternativeName>
        <fullName evidence="2">50S ribosomal protein L34</fullName>
    </alternativeName>
</protein>
<keyword id="KW-1185">Reference proteome</keyword>
<keyword id="KW-0687">Ribonucleoprotein</keyword>
<keyword id="KW-0689">Ribosomal protein</keyword>
<comment type="similarity">
    <text evidence="1">Belongs to the bacterial ribosomal protein bL34 family.</text>
</comment>
<name>RL34_BRADU</name>
<sequence>MKRTYQPSKLVRKRRHGFRARLATAGGRKVLAARRARGRKRLSA</sequence>
<feature type="chain" id="PRO_0000187351" description="Large ribosomal subunit protein bL34">
    <location>
        <begin position="1"/>
        <end position="44"/>
    </location>
</feature>
<gene>
    <name evidence="1" type="primary">rpmH</name>
    <name type="ordered locus">bsr8096</name>
</gene>
<dbReference type="EMBL" id="BA000040">
    <property type="protein sequence ID" value="BAC53361.1"/>
    <property type="molecule type" value="Genomic_DNA"/>
</dbReference>
<dbReference type="RefSeq" id="NP_774736.1">
    <property type="nucleotide sequence ID" value="NC_004463.1"/>
</dbReference>
<dbReference type="RefSeq" id="WP_008542748.1">
    <property type="nucleotide sequence ID" value="NZ_CP011360.1"/>
</dbReference>
<dbReference type="SMR" id="Q89BQ2"/>
<dbReference type="FunCoup" id="Q89BQ2">
    <property type="interactions" value="478"/>
</dbReference>
<dbReference type="STRING" id="224911.AAV28_38175"/>
<dbReference type="EnsemblBacteria" id="BAC53361">
    <property type="protein sequence ID" value="BAC53361"/>
    <property type="gene ID" value="BAC53361"/>
</dbReference>
<dbReference type="GeneID" id="93218751"/>
<dbReference type="KEGG" id="bja:bsr8096"/>
<dbReference type="PATRIC" id="fig|224911.44.peg.8266"/>
<dbReference type="eggNOG" id="COG0230">
    <property type="taxonomic scope" value="Bacteria"/>
</dbReference>
<dbReference type="HOGENOM" id="CLU_129938_2_0_5"/>
<dbReference type="InParanoid" id="Q89BQ2"/>
<dbReference type="PhylomeDB" id="Q89BQ2"/>
<dbReference type="PRO" id="PR:Q89BQ2"/>
<dbReference type="Proteomes" id="UP000002526">
    <property type="component" value="Chromosome"/>
</dbReference>
<dbReference type="GO" id="GO:1990904">
    <property type="term" value="C:ribonucleoprotein complex"/>
    <property type="evidence" value="ECO:0007669"/>
    <property type="project" value="UniProtKB-KW"/>
</dbReference>
<dbReference type="GO" id="GO:0005840">
    <property type="term" value="C:ribosome"/>
    <property type="evidence" value="ECO:0007669"/>
    <property type="project" value="UniProtKB-KW"/>
</dbReference>
<dbReference type="GO" id="GO:0003735">
    <property type="term" value="F:structural constituent of ribosome"/>
    <property type="evidence" value="ECO:0007669"/>
    <property type="project" value="InterPro"/>
</dbReference>
<dbReference type="GO" id="GO:0006412">
    <property type="term" value="P:translation"/>
    <property type="evidence" value="ECO:0007669"/>
    <property type="project" value="UniProtKB-UniRule"/>
</dbReference>
<dbReference type="FunFam" id="1.10.287.3980:FF:000001">
    <property type="entry name" value="Mitochondrial ribosomal protein L34"/>
    <property type="match status" value="1"/>
</dbReference>
<dbReference type="Gene3D" id="1.10.287.3980">
    <property type="match status" value="1"/>
</dbReference>
<dbReference type="HAMAP" id="MF_00391">
    <property type="entry name" value="Ribosomal_bL34"/>
    <property type="match status" value="1"/>
</dbReference>
<dbReference type="InterPro" id="IPR000271">
    <property type="entry name" value="Ribosomal_bL34"/>
</dbReference>
<dbReference type="InterPro" id="IPR020939">
    <property type="entry name" value="Ribosomal_bL34_CS"/>
</dbReference>
<dbReference type="NCBIfam" id="TIGR01030">
    <property type="entry name" value="rpmH_bact"/>
    <property type="match status" value="1"/>
</dbReference>
<dbReference type="PANTHER" id="PTHR14503:SF4">
    <property type="entry name" value="LARGE RIBOSOMAL SUBUNIT PROTEIN BL34M"/>
    <property type="match status" value="1"/>
</dbReference>
<dbReference type="PANTHER" id="PTHR14503">
    <property type="entry name" value="MITOCHONDRIAL RIBOSOMAL PROTEIN 34 FAMILY MEMBER"/>
    <property type="match status" value="1"/>
</dbReference>
<dbReference type="Pfam" id="PF00468">
    <property type="entry name" value="Ribosomal_L34"/>
    <property type="match status" value="1"/>
</dbReference>
<dbReference type="PROSITE" id="PS00784">
    <property type="entry name" value="RIBOSOMAL_L34"/>
    <property type="match status" value="1"/>
</dbReference>
<accession>Q89BQ2</accession>
<proteinExistence type="inferred from homology"/>
<evidence type="ECO:0000255" key="1">
    <source>
        <dbReference type="HAMAP-Rule" id="MF_00391"/>
    </source>
</evidence>
<evidence type="ECO:0000305" key="2"/>